<reference key="1">
    <citation type="submission" date="2006-05" db="EMBL/GenBank/DDBJ databases">
        <authorList>
            <consortium name="Genoscope"/>
        </authorList>
    </citation>
    <scope>NUCLEOTIDE SEQUENCE [LARGE SCALE GENOMIC DNA]</scope>
    <source>
        <strain>RCC307</strain>
    </source>
</reference>
<protein>
    <recommendedName>
        <fullName evidence="1">Large ribosomal subunit protein uL5</fullName>
    </recommendedName>
    <alternativeName>
        <fullName evidence="2">50S ribosomal protein L5</fullName>
    </alternativeName>
</protein>
<proteinExistence type="inferred from homology"/>
<keyword id="KW-1185">Reference proteome</keyword>
<keyword id="KW-0687">Ribonucleoprotein</keyword>
<keyword id="KW-0689">Ribosomal protein</keyword>
<keyword id="KW-0694">RNA-binding</keyword>
<keyword id="KW-0699">rRNA-binding</keyword>
<keyword id="KW-0820">tRNA-binding</keyword>
<gene>
    <name evidence="1" type="primary">rplE</name>
    <name evidence="1" type="synonym">rpl5</name>
    <name type="ordered locus">SynRCC307_2128</name>
</gene>
<feature type="chain" id="PRO_1000052850" description="Large ribosomal subunit protein uL5">
    <location>
        <begin position="1"/>
        <end position="179"/>
    </location>
</feature>
<evidence type="ECO:0000255" key="1">
    <source>
        <dbReference type="HAMAP-Rule" id="MF_01333"/>
    </source>
</evidence>
<evidence type="ECO:0000305" key="2"/>
<organism>
    <name type="scientific">Synechococcus sp. (strain RCC307)</name>
    <dbReference type="NCBI Taxonomy" id="316278"/>
    <lineage>
        <taxon>Bacteria</taxon>
        <taxon>Bacillati</taxon>
        <taxon>Cyanobacteriota</taxon>
        <taxon>Cyanophyceae</taxon>
        <taxon>Synechococcales</taxon>
        <taxon>Synechococcaceae</taxon>
        <taxon>Synechococcus</taxon>
    </lineage>
</organism>
<accession>A5GVX2</accession>
<comment type="function">
    <text evidence="1">This is one of the proteins that bind and probably mediate the attachment of the 5S RNA into the large ribosomal subunit, where it forms part of the central protuberance. In the 70S ribosome it contacts protein S13 of the 30S subunit (bridge B1b), connecting the 2 subunits; this bridge is implicated in subunit movement. Contacts the P site tRNA; the 5S rRNA and some of its associated proteins might help stabilize positioning of ribosome-bound tRNAs.</text>
</comment>
<comment type="subunit">
    <text evidence="1">Part of the 50S ribosomal subunit; part of the 5S rRNA/L5/L18/L25 subcomplex. Contacts the 5S rRNA and the P site tRNA. Forms a bridge to the 30S subunit in the 70S ribosome.</text>
</comment>
<comment type="similarity">
    <text evidence="1">Belongs to the universal ribosomal protein uL5 family.</text>
</comment>
<sequence length="179" mass="20072">MSLKKRYREAIQPKLLKDLNFSNLHQVPKVVKVTVNRGLGEAAQNAKSLEASVEEIATITGQKPVVTRAKKAIAGFKIRQGMPIGVAVTLRGDRMYAFLERLINLALPRIRDFRGVSEKSFDGRGNYTLGVREQIIFPEISFDKIDAIRGMDITIVTTARNDEEGQALLREMGMPFRNN</sequence>
<dbReference type="EMBL" id="CT978603">
    <property type="protein sequence ID" value="CAK29031.1"/>
    <property type="molecule type" value="Genomic_DNA"/>
</dbReference>
<dbReference type="SMR" id="A5GVX2"/>
<dbReference type="STRING" id="316278.SynRCC307_2128"/>
<dbReference type="KEGG" id="syr:SynRCC307_2128"/>
<dbReference type="eggNOG" id="COG0094">
    <property type="taxonomic scope" value="Bacteria"/>
</dbReference>
<dbReference type="HOGENOM" id="CLU_061015_2_1_3"/>
<dbReference type="OrthoDB" id="9806626at2"/>
<dbReference type="Proteomes" id="UP000001115">
    <property type="component" value="Chromosome"/>
</dbReference>
<dbReference type="GO" id="GO:1990904">
    <property type="term" value="C:ribonucleoprotein complex"/>
    <property type="evidence" value="ECO:0007669"/>
    <property type="project" value="UniProtKB-KW"/>
</dbReference>
<dbReference type="GO" id="GO:0005840">
    <property type="term" value="C:ribosome"/>
    <property type="evidence" value="ECO:0007669"/>
    <property type="project" value="UniProtKB-KW"/>
</dbReference>
<dbReference type="GO" id="GO:0019843">
    <property type="term" value="F:rRNA binding"/>
    <property type="evidence" value="ECO:0007669"/>
    <property type="project" value="UniProtKB-UniRule"/>
</dbReference>
<dbReference type="GO" id="GO:0003735">
    <property type="term" value="F:structural constituent of ribosome"/>
    <property type="evidence" value="ECO:0007669"/>
    <property type="project" value="InterPro"/>
</dbReference>
<dbReference type="GO" id="GO:0000049">
    <property type="term" value="F:tRNA binding"/>
    <property type="evidence" value="ECO:0007669"/>
    <property type="project" value="UniProtKB-UniRule"/>
</dbReference>
<dbReference type="GO" id="GO:0006412">
    <property type="term" value="P:translation"/>
    <property type="evidence" value="ECO:0007669"/>
    <property type="project" value="UniProtKB-UniRule"/>
</dbReference>
<dbReference type="FunFam" id="3.30.1440.10:FF:000001">
    <property type="entry name" value="50S ribosomal protein L5"/>
    <property type="match status" value="1"/>
</dbReference>
<dbReference type="Gene3D" id="3.30.1440.10">
    <property type="match status" value="1"/>
</dbReference>
<dbReference type="HAMAP" id="MF_01333_B">
    <property type="entry name" value="Ribosomal_uL5_B"/>
    <property type="match status" value="1"/>
</dbReference>
<dbReference type="InterPro" id="IPR002132">
    <property type="entry name" value="Ribosomal_uL5"/>
</dbReference>
<dbReference type="InterPro" id="IPR020930">
    <property type="entry name" value="Ribosomal_uL5_bac-type"/>
</dbReference>
<dbReference type="InterPro" id="IPR031309">
    <property type="entry name" value="Ribosomal_uL5_C"/>
</dbReference>
<dbReference type="InterPro" id="IPR020929">
    <property type="entry name" value="Ribosomal_uL5_CS"/>
</dbReference>
<dbReference type="InterPro" id="IPR022803">
    <property type="entry name" value="Ribosomal_uL5_dom_sf"/>
</dbReference>
<dbReference type="InterPro" id="IPR031310">
    <property type="entry name" value="Ribosomal_uL5_N"/>
</dbReference>
<dbReference type="NCBIfam" id="NF000585">
    <property type="entry name" value="PRK00010.1"/>
    <property type="match status" value="1"/>
</dbReference>
<dbReference type="PANTHER" id="PTHR11994">
    <property type="entry name" value="60S RIBOSOMAL PROTEIN L11-RELATED"/>
    <property type="match status" value="1"/>
</dbReference>
<dbReference type="Pfam" id="PF00281">
    <property type="entry name" value="Ribosomal_L5"/>
    <property type="match status" value="1"/>
</dbReference>
<dbReference type="Pfam" id="PF00673">
    <property type="entry name" value="Ribosomal_L5_C"/>
    <property type="match status" value="1"/>
</dbReference>
<dbReference type="PIRSF" id="PIRSF002161">
    <property type="entry name" value="Ribosomal_L5"/>
    <property type="match status" value="1"/>
</dbReference>
<dbReference type="SUPFAM" id="SSF55282">
    <property type="entry name" value="RL5-like"/>
    <property type="match status" value="1"/>
</dbReference>
<dbReference type="PROSITE" id="PS00358">
    <property type="entry name" value="RIBOSOMAL_L5"/>
    <property type="match status" value="1"/>
</dbReference>
<name>RL5_SYNR3</name>